<feature type="chain" id="PRO_0000156848" description="Putative antitoxin VapB7">
    <location>
        <begin position="1"/>
        <end position="65"/>
    </location>
</feature>
<gene>
    <name type="primary">vapB7</name>
    <name type="ordered locus">AF_0319</name>
</gene>
<name>VAPB7_ARCFU</name>
<sequence length="65" mass="7341">MPKVIEAVYENGVFKPLQKVDLKEGEKVKVELKESVVESVAGILKVSDEKVKKALEMIEYGEDIY</sequence>
<keyword id="KW-1185">Reference proteome</keyword>
<keyword id="KW-1277">Toxin-antitoxin system</keyword>
<protein>
    <recommendedName>
        <fullName>Putative antitoxin VapB7</fullName>
    </recommendedName>
</protein>
<evidence type="ECO:0000305" key="1"/>
<proteinExistence type="inferred from homology"/>
<accession>O29926</accession>
<organism>
    <name type="scientific">Archaeoglobus fulgidus (strain ATCC 49558 / DSM 4304 / JCM 9628 / NBRC 100126 / VC-16)</name>
    <dbReference type="NCBI Taxonomy" id="224325"/>
    <lineage>
        <taxon>Archaea</taxon>
        <taxon>Methanobacteriati</taxon>
        <taxon>Methanobacteriota</taxon>
        <taxon>Archaeoglobi</taxon>
        <taxon>Archaeoglobales</taxon>
        <taxon>Archaeoglobaceae</taxon>
        <taxon>Archaeoglobus</taxon>
    </lineage>
</organism>
<reference key="1">
    <citation type="journal article" date="1997" name="Nature">
        <title>The complete genome sequence of the hyperthermophilic, sulphate-reducing archaeon Archaeoglobus fulgidus.</title>
        <authorList>
            <person name="Klenk H.-P."/>
            <person name="Clayton R.A."/>
            <person name="Tomb J.-F."/>
            <person name="White O."/>
            <person name="Nelson K.E."/>
            <person name="Ketchum K.A."/>
            <person name="Dodson R.J."/>
            <person name="Gwinn M.L."/>
            <person name="Hickey E.K."/>
            <person name="Peterson J.D."/>
            <person name="Richardson D.L."/>
            <person name="Kerlavage A.R."/>
            <person name="Graham D.E."/>
            <person name="Kyrpides N.C."/>
            <person name="Fleischmann R.D."/>
            <person name="Quackenbush J."/>
            <person name="Lee N.H."/>
            <person name="Sutton G.G."/>
            <person name="Gill S.R."/>
            <person name="Kirkness E.F."/>
            <person name="Dougherty B.A."/>
            <person name="McKenney K."/>
            <person name="Adams M.D."/>
            <person name="Loftus B.J."/>
            <person name="Peterson S.N."/>
            <person name="Reich C.I."/>
            <person name="McNeil L.K."/>
            <person name="Badger J.H."/>
            <person name="Glodek A."/>
            <person name="Zhou L."/>
            <person name="Overbeek R."/>
            <person name="Gocayne J.D."/>
            <person name="Weidman J.F."/>
            <person name="McDonald L.A."/>
            <person name="Utterback T.R."/>
            <person name="Cotton M.D."/>
            <person name="Spriggs T."/>
            <person name="Artiach P."/>
            <person name="Kaine B.P."/>
            <person name="Sykes S.M."/>
            <person name="Sadow P.W."/>
            <person name="D'Andrea K.P."/>
            <person name="Bowman C."/>
            <person name="Fujii C."/>
            <person name="Garland S.A."/>
            <person name="Mason T.M."/>
            <person name="Olsen G.J."/>
            <person name="Fraser C.M."/>
            <person name="Smith H.O."/>
            <person name="Woese C.R."/>
            <person name="Venter J.C."/>
        </authorList>
    </citation>
    <scope>NUCLEOTIDE SEQUENCE [LARGE SCALE GENOMIC DNA]</scope>
    <source>
        <strain>ATCC 49558 / DSM 4304 / JCM 9628 / NBRC 100126 / VC-16</strain>
    </source>
</reference>
<reference key="2">
    <citation type="journal article" date="2005" name="Nucleic Acids Res.">
        <title>Toxin-antitoxin loci are highly abundant in free-living but lost from host-associated prokaryotes.</title>
        <authorList>
            <person name="Pandey D.P."/>
            <person name="Gerdes K."/>
        </authorList>
    </citation>
    <scope>IDENTIFICATION</scope>
    <scope>POSSIBLE FUNCTION</scope>
    <source>
        <strain>ATCC 49558 / DSM 4304 / JCM 9628 / NBRC 100126 / VC-16</strain>
    </source>
</reference>
<comment type="function">
    <text evidence="1">Possibly the antitoxin component of a type II toxin-antitoxin (TA) system. Its cognate toxin is VapC7 (Potential).</text>
</comment>
<comment type="similarity">
    <text evidence="1">Belongs to the UPF0165 family.</text>
</comment>
<comment type="sequence caution" evidence="1">
    <conflict type="erroneous initiation">
        <sequence resource="EMBL-CDS" id="AAB90924"/>
    </conflict>
    <text>Extended N-terminus.</text>
</comment>
<dbReference type="EMBL" id="AE000782">
    <property type="protein sequence ID" value="AAB90924.1"/>
    <property type="status" value="ALT_INIT"/>
    <property type="molecule type" value="Genomic_DNA"/>
</dbReference>
<dbReference type="PIR" id="G69289">
    <property type="entry name" value="G69289"/>
</dbReference>
<dbReference type="RefSeq" id="WP_048064614.1">
    <property type="nucleotide sequence ID" value="NC_000917.1"/>
</dbReference>
<dbReference type="SMR" id="O29926"/>
<dbReference type="STRING" id="224325.AF_0319"/>
<dbReference type="PaxDb" id="224325-AF_0319"/>
<dbReference type="EnsemblBacteria" id="AAB90924">
    <property type="protein sequence ID" value="AAB90924"/>
    <property type="gene ID" value="AF_0319"/>
</dbReference>
<dbReference type="KEGG" id="afu:AF_0319"/>
<dbReference type="eggNOG" id="arCOG03880">
    <property type="taxonomic scope" value="Archaea"/>
</dbReference>
<dbReference type="HOGENOM" id="CLU_200885_3_1_2"/>
<dbReference type="Proteomes" id="UP000002199">
    <property type="component" value="Chromosome"/>
</dbReference>
<dbReference type="Gene3D" id="4.10.1150.10">
    <property type="entry name" value="AF2212/PG0164-like"/>
    <property type="match status" value="1"/>
</dbReference>
<dbReference type="InterPro" id="IPR008203">
    <property type="entry name" value="AF2212-like"/>
</dbReference>
<dbReference type="InterPro" id="IPR024069">
    <property type="entry name" value="AF2212-like_dom_sf"/>
</dbReference>
<dbReference type="Pfam" id="PF01954">
    <property type="entry name" value="AF2212-like"/>
    <property type="match status" value="1"/>
</dbReference>
<dbReference type="SUPFAM" id="SSF141694">
    <property type="entry name" value="AF2212/PG0164-like"/>
    <property type="match status" value="1"/>
</dbReference>